<name>DIUH1_MANSE</name>
<sequence>MMWWAIWCVMVVVSSAASAAPAPDSAPMDLVQIDSAGPDDESLGYAVSSLEGRYGAEAPWLYLLAEMPRDSQIGRAAVKRRMPSLSIDLPMSVLRQKLSLEKERKVHALRAAANRNFLNDIGKRGLQWSRSEQPSAYY</sequence>
<evidence type="ECO:0000255" key="1"/>
<evidence type="ECO:0000269" key="2">
    <source>
    </source>
</evidence>
<evidence type="ECO:0000305" key="3"/>
<proteinExistence type="evidence at protein level"/>
<comment type="function">
    <text>Regulation of fluid secretion.</text>
</comment>
<comment type="subcellular location">
    <subcellularLocation>
        <location>Secreted</location>
    </subcellularLocation>
</comment>
<comment type="similarity">
    <text evidence="3">Belongs to the sauvagine/corticotropin-releasing factor/urotensin I family.</text>
</comment>
<keyword id="KW-0027">Amidation</keyword>
<keyword id="KW-0165">Cleavage on pair of basic residues</keyword>
<keyword id="KW-0903">Direct protein sequencing</keyword>
<keyword id="KW-0372">Hormone</keyword>
<keyword id="KW-0964">Secreted</keyword>
<keyword id="KW-0732">Signal</keyword>
<dbReference type="EMBL" id="L04628">
    <property type="protein sequence ID" value="AAB59200.1"/>
    <property type="molecule type" value="mRNA"/>
</dbReference>
<dbReference type="PIR" id="A46377">
    <property type="entry name" value="SWWOD"/>
</dbReference>
<dbReference type="RefSeq" id="XP_030034305.1">
    <property type="nucleotide sequence ID" value="XM_030178445.1"/>
</dbReference>
<dbReference type="SMR" id="P21819"/>
<dbReference type="EnsemblMetazoa" id="XM_030178445.1">
    <property type="protein sequence ID" value="XP_030034305.1"/>
    <property type="gene ID" value="LOC115450429"/>
</dbReference>
<dbReference type="GeneID" id="115450429"/>
<dbReference type="OrthoDB" id="6418774at2759"/>
<dbReference type="GO" id="GO:0005576">
    <property type="term" value="C:extracellular region"/>
    <property type="evidence" value="ECO:0000314"/>
    <property type="project" value="UniProtKB"/>
</dbReference>
<dbReference type="GO" id="GO:0008613">
    <property type="term" value="F:diuretic hormone activity"/>
    <property type="evidence" value="ECO:0000314"/>
    <property type="project" value="UniProtKB"/>
</dbReference>
<dbReference type="GO" id="GO:0007589">
    <property type="term" value="P:body fluid secretion"/>
    <property type="evidence" value="ECO:0000314"/>
    <property type="project" value="UniProtKB"/>
</dbReference>
<dbReference type="InterPro" id="IPR018446">
    <property type="entry name" value="Corticotropin-releasing_fac_CS"/>
</dbReference>
<dbReference type="InterPro" id="IPR000187">
    <property type="entry name" value="CRF"/>
</dbReference>
<dbReference type="Pfam" id="PF00473">
    <property type="entry name" value="CRF"/>
    <property type="match status" value="1"/>
</dbReference>
<dbReference type="SMART" id="SM00039">
    <property type="entry name" value="CRF"/>
    <property type="match status" value="1"/>
</dbReference>
<dbReference type="PROSITE" id="PS00511">
    <property type="entry name" value="CRF"/>
    <property type="match status" value="1"/>
</dbReference>
<reference key="1">
    <citation type="journal article" date="1992" name="Proc. Natl. Acad. Sci. U.S.A.">
        <title>Characterization of the precursor for Manduca sexta diuretic hormone Mas-DH.</title>
        <authorList>
            <person name="Digan M.E."/>
            <person name="Roberts D.N."/>
            <person name="Enderlin F.E."/>
            <person name="Woodworth A.R."/>
            <person name="Kramer S.J."/>
        </authorList>
    </citation>
    <scope>NUCLEOTIDE SEQUENCE [MRNA]</scope>
</reference>
<reference key="2">
    <citation type="journal article" date="1989" name="Proc. Natl. Acad. Sci. U.S.A.">
        <title>Isolation and identification of a diuretic hormone from the tobacco hornworm, Manduca sexta.</title>
        <authorList>
            <person name="Kataoka H."/>
            <person name="Troetschler R.G."/>
            <person name="Li J.P."/>
            <person name="Kramer S.J."/>
            <person name="Carney R.L."/>
            <person name="Schooley D.A."/>
        </authorList>
    </citation>
    <scope>PROTEIN SEQUENCE OF 81-121</scope>
    <scope>AMIDATION AT ILE-121</scope>
    <source>
        <tissue>Corpora cardiaca</tissue>
    </source>
</reference>
<organism>
    <name type="scientific">Manduca sexta</name>
    <name type="common">Tobacco hawkmoth</name>
    <name type="synonym">Tobacco hornworm</name>
    <dbReference type="NCBI Taxonomy" id="7130"/>
    <lineage>
        <taxon>Eukaryota</taxon>
        <taxon>Metazoa</taxon>
        <taxon>Ecdysozoa</taxon>
        <taxon>Arthropoda</taxon>
        <taxon>Hexapoda</taxon>
        <taxon>Insecta</taxon>
        <taxon>Pterygota</taxon>
        <taxon>Neoptera</taxon>
        <taxon>Endopterygota</taxon>
        <taxon>Lepidoptera</taxon>
        <taxon>Glossata</taxon>
        <taxon>Ditrysia</taxon>
        <taxon>Bombycoidea</taxon>
        <taxon>Sphingidae</taxon>
        <taxon>Sphinginae</taxon>
        <taxon>Sphingini</taxon>
        <taxon>Manduca</taxon>
    </lineage>
</organism>
<accession>P21819</accession>
<feature type="signal peptide" evidence="1">
    <location>
        <begin position="1"/>
        <end position="19"/>
    </location>
</feature>
<feature type="propeptide" id="PRO_0000006230">
    <location>
        <begin position="20"/>
        <end position="78"/>
    </location>
</feature>
<feature type="peptide" id="PRO_0000006231" description="Diuretic hormone 1">
    <location>
        <begin position="81"/>
        <end position="121"/>
    </location>
</feature>
<feature type="propeptide" id="PRO_0000006232">
    <location>
        <begin position="125"/>
        <end position="138"/>
    </location>
</feature>
<feature type="modified residue" description="Isoleucine amide" evidence="2">
    <location>
        <position position="121"/>
    </location>
</feature>
<protein>
    <recommendedName>
        <fullName>Diuretic hormone 1</fullName>
        <shortName>DH-1</shortName>
    </recommendedName>
    <alternativeName>
        <fullName>Diuretic peptide 1</fullName>
        <shortName>DP-1</shortName>
    </alternativeName>
    <alternativeName>
        <fullName>Mas-DH</fullName>
    </alternativeName>
</protein>